<reference key="1">
    <citation type="journal article" date="2004" name="Genome Res.">
        <title>Genome sequence of Haloarcula marismortui: a halophilic archaeon from the Dead Sea.</title>
        <authorList>
            <person name="Baliga N.S."/>
            <person name="Bonneau R."/>
            <person name="Facciotti M.T."/>
            <person name="Pan M."/>
            <person name="Glusman G."/>
            <person name="Deutsch E.W."/>
            <person name="Shannon P."/>
            <person name="Chiu Y."/>
            <person name="Weng R.S."/>
            <person name="Gan R.R."/>
            <person name="Hung P."/>
            <person name="Date S.V."/>
            <person name="Marcotte E."/>
            <person name="Hood L."/>
            <person name="Ng W.V."/>
        </authorList>
    </citation>
    <scope>NUCLEOTIDE SEQUENCE [LARGE SCALE GENOMIC DNA]</scope>
    <source>
        <strain>ATCC 43049 / DSM 3752 / JCM 8966 / VKM B-1809</strain>
    </source>
</reference>
<name>MEND_HALMA</name>
<organism>
    <name type="scientific">Haloarcula marismortui (strain ATCC 43049 / DSM 3752 / JCM 8966 / VKM B-1809)</name>
    <name type="common">Halobacterium marismortui</name>
    <dbReference type="NCBI Taxonomy" id="272569"/>
    <lineage>
        <taxon>Archaea</taxon>
        <taxon>Methanobacteriati</taxon>
        <taxon>Methanobacteriota</taxon>
        <taxon>Stenosarchaea group</taxon>
        <taxon>Halobacteria</taxon>
        <taxon>Halobacteriales</taxon>
        <taxon>Haloarculaceae</taxon>
        <taxon>Haloarcula</taxon>
    </lineage>
</organism>
<accession>Q5V3T2</accession>
<gene>
    <name evidence="1" type="primary">menD</name>
    <name type="ordered locus">rrnAC0838</name>
</gene>
<evidence type="ECO:0000255" key="1">
    <source>
        <dbReference type="HAMAP-Rule" id="MF_01659"/>
    </source>
</evidence>
<evidence type="ECO:0000305" key="2"/>
<sequence>MTAPNVNTLWAETLVGELVAGGVDAVCLSPGSRSTPLTVAFAEHPDIEVFSHLDERSAAFFALGRARRTGEPTPLVCTSGTAAANYHPAVIEANQSGVPLLLLTADRPPELIDSGANQTVDQEKLYGDAVRWYRDMPEPEAEPRKVRMLRTTAARALAESTGSDPGPVHLNCRFRKPLEPTPMPEDDPAGVPADWAGGDNGAKIGRDGPFVTTSEGVETPDEQTVRRVQDALEAAERGLIVAGPADQGLSADSLERLAAATGFPVLADPLSDLRFGPHVDRLDVPVCGGYDGYLGSDSVDQWDDPDVVVRFGASPTSKPLRHYLRDADCQQFLVDPAGGWSEAEFTATNLLVANPDATADALAGETLGGVAASWREQFIRAEQTHWDAVTETASETYWEGGVLSDVTALAPDPATLFISNSMPIRDMDRFGGPRDADLTVLGNRGASGIDGITSTALGAGSATSDPLVLVTGDLAYYHDMNGLLALGRCAVDATVVLLNNDGGGIFHMLPIEDHPTFEDQFRTPHGLDFEPTEALYSLQFERVADRRQFRERFAESVQTDGTQVIEVRFDAGDSHAVRDQLTEQVAETLAGD</sequence>
<proteinExistence type="inferred from homology"/>
<keyword id="KW-0460">Magnesium</keyword>
<keyword id="KW-0464">Manganese</keyword>
<keyword id="KW-0474">Menaquinone biosynthesis</keyword>
<keyword id="KW-0479">Metal-binding</keyword>
<keyword id="KW-1185">Reference proteome</keyword>
<keyword id="KW-0786">Thiamine pyrophosphate</keyword>
<keyword id="KW-0808">Transferase</keyword>
<protein>
    <recommendedName>
        <fullName evidence="1">2-succinyl-5-enolpyruvyl-6-hydroxy-3-cyclohexene-1-carboxylate synthase</fullName>
        <shortName evidence="1">SEPHCHC synthase</shortName>
        <ecNumber evidence="1">2.2.1.9</ecNumber>
    </recommendedName>
    <alternativeName>
        <fullName evidence="1">Menaquinone biosynthesis protein MenD</fullName>
    </alternativeName>
</protein>
<dbReference type="EC" id="2.2.1.9" evidence="1"/>
<dbReference type="EMBL" id="AY596297">
    <property type="protein sequence ID" value="AAV45820.1"/>
    <property type="status" value="ALT_INIT"/>
    <property type="molecule type" value="Genomic_DNA"/>
</dbReference>
<dbReference type="RefSeq" id="WP_049938828.1">
    <property type="nucleotide sequence ID" value="NC_006396.1"/>
</dbReference>
<dbReference type="SMR" id="Q5V3T2"/>
<dbReference type="STRING" id="272569.rrnAC0838"/>
<dbReference type="PaxDb" id="272569-rrnAC0838"/>
<dbReference type="DNASU" id="3129325"/>
<dbReference type="EnsemblBacteria" id="AAV45820">
    <property type="protein sequence ID" value="AAV45820"/>
    <property type="gene ID" value="rrnAC0838"/>
</dbReference>
<dbReference type="GeneID" id="40151863"/>
<dbReference type="KEGG" id="hma:rrnAC0838"/>
<dbReference type="PATRIC" id="fig|272569.17.peg.1577"/>
<dbReference type="eggNOG" id="arCOG04611">
    <property type="taxonomic scope" value="Archaea"/>
</dbReference>
<dbReference type="HOGENOM" id="CLU_006051_3_0_2"/>
<dbReference type="UniPathway" id="UPA00079"/>
<dbReference type="UniPathway" id="UPA01057">
    <property type="reaction ID" value="UER00164"/>
</dbReference>
<dbReference type="Proteomes" id="UP000001169">
    <property type="component" value="Chromosome I"/>
</dbReference>
<dbReference type="GO" id="GO:0070204">
    <property type="term" value="F:2-succinyl-5-enolpyruvyl-6-hydroxy-3-cyclohexene-1-carboxylic-acid synthase activity"/>
    <property type="evidence" value="ECO:0007669"/>
    <property type="project" value="UniProtKB-UniRule"/>
</dbReference>
<dbReference type="GO" id="GO:0000287">
    <property type="term" value="F:magnesium ion binding"/>
    <property type="evidence" value="ECO:0007669"/>
    <property type="project" value="UniProtKB-UniRule"/>
</dbReference>
<dbReference type="GO" id="GO:0030145">
    <property type="term" value="F:manganese ion binding"/>
    <property type="evidence" value="ECO:0007669"/>
    <property type="project" value="UniProtKB-UniRule"/>
</dbReference>
<dbReference type="GO" id="GO:0030976">
    <property type="term" value="F:thiamine pyrophosphate binding"/>
    <property type="evidence" value="ECO:0007669"/>
    <property type="project" value="UniProtKB-UniRule"/>
</dbReference>
<dbReference type="GO" id="GO:0009234">
    <property type="term" value="P:menaquinone biosynthetic process"/>
    <property type="evidence" value="ECO:0007669"/>
    <property type="project" value="UniProtKB-UniRule"/>
</dbReference>
<dbReference type="GO" id="GO:0006082">
    <property type="term" value="P:organic acid metabolic process"/>
    <property type="evidence" value="ECO:0007669"/>
    <property type="project" value="UniProtKB-ARBA"/>
</dbReference>
<dbReference type="GO" id="GO:0044272">
    <property type="term" value="P:sulfur compound biosynthetic process"/>
    <property type="evidence" value="ECO:0007669"/>
    <property type="project" value="UniProtKB-ARBA"/>
</dbReference>
<dbReference type="CDD" id="cd07037">
    <property type="entry name" value="TPP_PYR_MenD"/>
    <property type="match status" value="1"/>
</dbReference>
<dbReference type="CDD" id="cd02009">
    <property type="entry name" value="TPP_SHCHC_synthase"/>
    <property type="match status" value="1"/>
</dbReference>
<dbReference type="Gene3D" id="3.40.50.970">
    <property type="match status" value="2"/>
</dbReference>
<dbReference type="Gene3D" id="3.40.50.1220">
    <property type="entry name" value="TPP-binding domain"/>
    <property type="match status" value="1"/>
</dbReference>
<dbReference type="HAMAP" id="MF_01659">
    <property type="entry name" value="MenD"/>
    <property type="match status" value="1"/>
</dbReference>
<dbReference type="InterPro" id="IPR029035">
    <property type="entry name" value="DHS-like_NAD/FAD-binding_dom"/>
</dbReference>
<dbReference type="InterPro" id="IPR004433">
    <property type="entry name" value="MenaQ_synth_MenD"/>
</dbReference>
<dbReference type="InterPro" id="IPR032264">
    <property type="entry name" value="MenD_middle"/>
</dbReference>
<dbReference type="InterPro" id="IPR029061">
    <property type="entry name" value="THDP-binding"/>
</dbReference>
<dbReference type="InterPro" id="IPR012001">
    <property type="entry name" value="Thiamin_PyroP_enz_TPP-bd_dom"/>
</dbReference>
<dbReference type="InterPro" id="IPR011766">
    <property type="entry name" value="TPP_enzyme_TPP-bd"/>
</dbReference>
<dbReference type="NCBIfam" id="TIGR00173">
    <property type="entry name" value="menD"/>
    <property type="match status" value="1"/>
</dbReference>
<dbReference type="PANTHER" id="PTHR42916">
    <property type="entry name" value="2-SUCCINYL-5-ENOLPYRUVYL-6-HYDROXY-3-CYCLOHEXENE-1-CARBOXYLATE SYNTHASE"/>
    <property type="match status" value="1"/>
</dbReference>
<dbReference type="PANTHER" id="PTHR42916:SF1">
    <property type="entry name" value="PROTEIN PHYLLO, CHLOROPLASTIC"/>
    <property type="match status" value="1"/>
</dbReference>
<dbReference type="Pfam" id="PF02775">
    <property type="entry name" value="TPP_enzyme_C"/>
    <property type="match status" value="1"/>
</dbReference>
<dbReference type="Pfam" id="PF16582">
    <property type="entry name" value="TPP_enzyme_M_2"/>
    <property type="match status" value="1"/>
</dbReference>
<dbReference type="Pfam" id="PF02776">
    <property type="entry name" value="TPP_enzyme_N"/>
    <property type="match status" value="1"/>
</dbReference>
<dbReference type="PIRSF" id="PIRSF004983">
    <property type="entry name" value="MenD"/>
    <property type="match status" value="1"/>
</dbReference>
<dbReference type="SUPFAM" id="SSF52467">
    <property type="entry name" value="DHS-like NAD/FAD-binding domain"/>
    <property type="match status" value="1"/>
</dbReference>
<dbReference type="SUPFAM" id="SSF52518">
    <property type="entry name" value="Thiamin diphosphate-binding fold (THDP-binding)"/>
    <property type="match status" value="2"/>
</dbReference>
<feature type="chain" id="PRO_0000341896" description="2-succinyl-5-enolpyruvyl-6-hydroxy-3-cyclohexene-1-carboxylate synthase">
    <location>
        <begin position="1"/>
        <end position="592"/>
    </location>
</feature>
<comment type="function">
    <text evidence="1">Catalyzes the thiamine diphosphate-dependent decarboxylation of 2-oxoglutarate and the subsequent addition of the resulting succinic semialdehyde-thiamine pyrophosphate anion to isochorismate to yield 2-succinyl-5-enolpyruvyl-6-hydroxy-3-cyclohexene-1-carboxylate (SEPHCHC).</text>
</comment>
<comment type="catalytic activity">
    <reaction evidence="1">
        <text>isochorismate + 2-oxoglutarate + H(+) = 5-enolpyruvoyl-6-hydroxy-2-succinyl-cyclohex-3-ene-1-carboxylate + CO2</text>
        <dbReference type="Rhea" id="RHEA:25593"/>
        <dbReference type="ChEBI" id="CHEBI:15378"/>
        <dbReference type="ChEBI" id="CHEBI:16526"/>
        <dbReference type="ChEBI" id="CHEBI:16810"/>
        <dbReference type="ChEBI" id="CHEBI:29780"/>
        <dbReference type="ChEBI" id="CHEBI:58818"/>
        <dbReference type="EC" id="2.2.1.9"/>
    </reaction>
</comment>
<comment type="cofactor">
    <cofactor evidence="1">
        <name>Mg(2+)</name>
        <dbReference type="ChEBI" id="CHEBI:18420"/>
    </cofactor>
    <cofactor evidence="1">
        <name>Mn(2+)</name>
        <dbReference type="ChEBI" id="CHEBI:29035"/>
    </cofactor>
</comment>
<comment type="cofactor">
    <cofactor evidence="1">
        <name>thiamine diphosphate</name>
        <dbReference type="ChEBI" id="CHEBI:58937"/>
    </cofactor>
    <text evidence="1">Binds 1 thiamine pyrophosphate per subunit.</text>
</comment>
<comment type="pathway">
    <text evidence="1">Quinol/quinone metabolism; 1,4-dihydroxy-2-naphthoate biosynthesis; 1,4-dihydroxy-2-naphthoate from chorismate: step 2/7.</text>
</comment>
<comment type="pathway">
    <text evidence="1">Quinol/quinone metabolism; menaquinone biosynthesis.</text>
</comment>
<comment type="subunit">
    <text evidence="1">Homodimer.</text>
</comment>
<comment type="similarity">
    <text evidence="1">Belongs to the TPP enzyme family. MenD subfamily.</text>
</comment>
<comment type="sequence caution" evidence="2">
    <conflict type="erroneous initiation">
        <sequence resource="EMBL-CDS" id="AAV45820"/>
    </conflict>
</comment>